<keyword id="KW-0150">Chloroplast</keyword>
<keyword id="KW-0472">Membrane</keyword>
<keyword id="KW-0602">Photosynthesis</keyword>
<keyword id="KW-0934">Plastid</keyword>
<keyword id="KW-0793">Thylakoid</keyword>
<keyword id="KW-0812">Transmembrane</keyword>
<keyword id="KW-1133">Transmembrane helix</keyword>
<protein>
    <recommendedName>
        <fullName evidence="1">Photosystem I assembly protein Ycf4</fullName>
    </recommendedName>
</protein>
<accession>P62719</accession>
<accession>P30981</accession>
<accession>P30982</accession>
<reference key="1">
    <citation type="journal article" date="1991" name="Genetics">
        <title>Molecular analysis of the hot spot region related to length mutations in wheat chloroplast DNAs. I. Nucleotide divergence of genes and intergenic spacer regions located in the hot spot region.</title>
        <authorList>
            <person name="Ogihara Y."/>
            <person name="Terachi T."/>
            <person name="Sasakuma T."/>
        </authorList>
    </citation>
    <scope>NUCLEOTIDE SEQUENCE [GENOMIC DNA]</scope>
    <source>
        <tissue>Seedling</tissue>
    </source>
</reference>
<evidence type="ECO:0000255" key="1">
    <source>
        <dbReference type="HAMAP-Rule" id="MF_00437"/>
    </source>
</evidence>
<sequence length="185" mass="21696">MNWRSEHIWVELLKGSRKRGNFFWACILFLGSLGFLSVGISSYLGKNIISILPSQEILFFPQGVVMSFYGIAGLFISSYLWCTILWNVGSGYDRFDRKEGIVCIFRWGFPGIKRRVFLRFLMRDIQSIRIQVKEGLYPRRILYMEIRGQGIIPLTRTDDKFFTPREIEQKAAELAYFLRVPIEVF</sequence>
<gene>
    <name evidence="1" type="primary">ycf4</name>
</gene>
<proteinExistence type="inferred from homology"/>
<name>YCF4_AEGCR</name>
<dbReference type="EMBL" id="X62118">
    <property type="protein sequence ID" value="CAA44036.1"/>
    <property type="molecule type" value="Genomic_DNA"/>
</dbReference>
<dbReference type="PIR" id="S21986">
    <property type="entry name" value="S21986"/>
</dbReference>
<dbReference type="GO" id="GO:0009535">
    <property type="term" value="C:chloroplast thylakoid membrane"/>
    <property type="evidence" value="ECO:0007669"/>
    <property type="project" value="UniProtKB-SubCell"/>
</dbReference>
<dbReference type="GO" id="GO:0009522">
    <property type="term" value="C:photosystem I"/>
    <property type="evidence" value="ECO:0007669"/>
    <property type="project" value="InterPro"/>
</dbReference>
<dbReference type="GO" id="GO:0015979">
    <property type="term" value="P:photosynthesis"/>
    <property type="evidence" value="ECO:0007669"/>
    <property type="project" value="UniProtKB-UniRule"/>
</dbReference>
<dbReference type="HAMAP" id="MF_00437">
    <property type="entry name" value="Ycf4"/>
    <property type="match status" value="1"/>
</dbReference>
<dbReference type="InterPro" id="IPR003359">
    <property type="entry name" value="PSI_Ycf4_assembly"/>
</dbReference>
<dbReference type="PANTHER" id="PTHR33288">
    <property type="match status" value="1"/>
</dbReference>
<dbReference type="PANTHER" id="PTHR33288:SF4">
    <property type="entry name" value="PHOTOSYSTEM I ASSEMBLY PROTEIN YCF4"/>
    <property type="match status" value="1"/>
</dbReference>
<dbReference type="Pfam" id="PF02392">
    <property type="entry name" value="Ycf4"/>
    <property type="match status" value="1"/>
</dbReference>
<comment type="function">
    <text evidence="1">Seems to be required for the assembly of the photosystem I complex.</text>
</comment>
<comment type="subcellular location">
    <subcellularLocation>
        <location evidence="1">Plastid</location>
        <location evidence="1">Chloroplast thylakoid membrane</location>
        <topology evidence="1">Multi-pass membrane protein</topology>
    </subcellularLocation>
</comment>
<comment type="similarity">
    <text evidence="1">Belongs to the Ycf4 family.</text>
</comment>
<organism>
    <name type="scientific">Aegilops crassa</name>
    <name type="common">Persian goatgrass</name>
    <name type="synonym">Triticum crassum</name>
    <dbReference type="NCBI Taxonomy" id="4481"/>
    <lineage>
        <taxon>Eukaryota</taxon>
        <taxon>Viridiplantae</taxon>
        <taxon>Streptophyta</taxon>
        <taxon>Embryophyta</taxon>
        <taxon>Tracheophyta</taxon>
        <taxon>Spermatophyta</taxon>
        <taxon>Magnoliopsida</taxon>
        <taxon>Liliopsida</taxon>
        <taxon>Poales</taxon>
        <taxon>Poaceae</taxon>
        <taxon>BOP clade</taxon>
        <taxon>Pooideae</taxon>
        <taxon>Triticodae</taxon>
        <taxon>Triticeae</taxon>
        <taxon>Triticinae</taxon>
        <taxon>Aegilops</taxon>
    </lineage>
</organism>
<geneLocation type="chloroplast"/>
<feature type="chain" id="PRO_0000217591" description="Photosystem I assembly protein Ycf4">
    <location>
        <begin position="1"/>
        <end position="185"/>
    </location>
</feature>
<feature type="transmembrane region" description="Helical" evidence="1">
    <location>
        <begin position="21"/>
        <end position="43"/>
    </location>
</feature>
<feature type="transmembrane region" description="Helical" evidence="1">
    <location>
        <begin position="63"/>
        <end position="85"/>
    </location>
</feature>